<dbReference type="EMBL" id="BX248583">
    <property type="protein sequence ID" value="CAD83443.1"/>
    <property type="molecule type" value="Genomic_DNA"/>
</dbReference>
<dbReference type="SMR" id="Q7VR46"/>
<dbReference type="STRING" id="203907.Bfl377"/>
<dbReference type="KEGG" id="bfl:Bfl377"/>
<dbReference type="eggNOG" id="COG2835">
    <property type="taxonomic scope" value="Bacteria"/>
</dbReference>
<dbReference type="HOGENOM" id="CLU_155659_3_1_6"/>
<dbReference type="OrthoDB" id="9812205at2"/>
<dbReference type="Proteomes" id="UP000002192">
    <property type="component" value="Chromosome"/>
</dbReference>
<dbReference type="Gene3D" id="2.20.25.10">
    <property type="match status" value="1"/>
</dbReference>
<dbReference type="HAMAP" id="MF_01187">
    <property type="entry name" value="UPF0434"/>
    <property type="match status" value="1"/>
</dbReference>
<dbReference type="InterPro" id="IPR005651">
    <property type="entry name" value="Trm112-like"/>
</dbReference>
<dbReference type="Pfam" id="PF03966">
    <property type="entry name" value="Trm112p"/>
    <property type="match status" value="1"/>
</dbReference>
<dbReference type="SUPFAM" id="SSF158997">
    <property type="entry name" value="Trm112p-like"/>
    <property type="match status" value="1"/>
</dbReference>
<sequence length="61" mass="7219">MQKKLLEIIVCPFCYTRLFMNDTETELICNIENISFPLKQGIPVLLKNQIRYLNCKIIDNQ</sequence>
<reference key="1">
    <citation type="journal article" date="2003" name="Proc. Natl. Acad. Sci. U.S.A.">
        <title>The genome sequence of Blochmannia floridanus: comparative analysis of reduced genomes.</title>
        <authorList>
            <person name="Gil R."/>
            <person name="Silva F.J."/>
            <person name="Zientz E."/>
            <person name="Delmotte F."/>
            <person name="Gonzalez-Candelas F."/>
            <person name="Latorre A."/>
            <person name="Rausell C."/>
            <person name="Kamerbeek J."/>
            <person name="Gadau J."/>
            <person name="Hoelldobler B."/>
            <person name="van Ham R.C.H.J."/>
            <person name="Gross R."/>
            <person name="Moya A."/>
        </authorList>
    </citation>
    <scope>NUCLEOTIDE SEQUENCE [LARGE SCALE GENOMIC DNA]</scope>
</reference>
<comment type="similarity">
    <text evidence="1">Belongs to the UPF0434 family.</text>
</comment>
<keyword id="KW-1185">Reference proteome</keyword>
<gene>
    <name type="ordered locus">Bfl377</name>
</gene>
<feature type="chain" id="PRO_0000291060" description="UPF0434 protein Bfl377">
    <location>
        <begin position="1"/>
        <end position="61"/>
    </location>
</feature>
<evidence type="ECO:0000255" key="1">
    <source>
        <dbReference type="HAMAP-Rule" id="MF_01187"/>
    </source>
</evidence>
<protein>
    <recommendedName>
        <fullName evidence="1">UPF0434 protein Bfl377</fullName>
    </recommendedName>
</protein>
<proteinExistence type="inferred from homology"/>
<organism>
    <name type="scientific">Blochmanniella floridana</name>
    <dbReference type="NCBI Taxonomy" id="203907"/>
    <lineage>
        <taxon>Bacteria</taxon>
        <taxon>Pseudomonadati</taxon>
        <taxon>Pseudomonadota</taxon>
        <taxon>Gammaproteobacteria</taxon>
        <taxon>Enterobacterales</taxon>
        <taxon>Enterobacteriaceae</taxon>
        <taxon>ant endosymbionts</taxon>
        <taxon>Candidatus Blochmanniella</taxon>
    </lineage>
</organism>
<name>Y377_BLOFL</name>
<accession>Q7VR46</accession>